<dbReference type="EMBL" id="CP000738">
    <property type="protein sequence ID" value="ABR59304.1"/>
    <property type="molecule type" value="Genomic_DNA"/>
</dbReference>
<dbReference type="RefSeq" id="WP_011974651.1">
    <property type="nucleotide sequence ID" value="NC_009636.1"/>
</dbReference>
<dbReference type="RefSeq" id="YP_001326139.1">
    <property type="nucleotide sequence ID" value="NC_009636.1"/>
</dbReference>
<dbReference type="SMR" id="A6U6M4"/>
<dbReference type="STRING" id="366394.Smed_0447"/>
<dbReference type="KEGG" id="smd:Smed_0447"/>
<dbReference type="PATRIC" id="fig|366394.8.peg.3531"/>
<dbReference type="eggNOG" id="COG0356">
    <property type="taxonomic scope" value="Bacteria"/>
</dbReference>
<dbReference type="HOGENOM" id="CLU_041018_0_2_5"/>
<dbReference type="OrthoDB" id="9809130at2"/>
<dbReference type="Proteomes" id="UP000001108">
    <property type="component" value="Chromosome"/>
</dbReference>
<dbReference type="GO" id="GO:0005886">
    <property type="term" value="C:plasma membrane"/>
    <property type="evidence" value="ECO:0007669"/>
    <property type="project" value="UniProtKB-SubCell"/>
</dbReference>
<dbReference type="GO" id="GO:0045259">
    <property type="term" value="C:proton-transporting ATP synthase complex"/>
    <property type="evidence" value="ECO:0007669"/>
    <property type="project" value="UniProtKB-KW"/>
</dbReference>
<dbReference type="GO" id="GO:0046933">
    <property type="term" value="F:proton-transporting ATP synthase activity, rotational mechanism"/>
    <property type="evidence" value="ECO:0007669"/>
    <property type="project" value="UniProtKB-UniRule"/>
</dbReference>
<dbReference type="CDD" id="cd00310">
    <property type="entry name" value="ATP-synt_Fo_a_6"/>
    <property type="match status" value="1"/>
</dbReference>
<dbReference type="FunFam" id="1.20.120.220:FF:000003">
    <property type="entry name" value="ATP synthase subunit a"/>
    <property type="match status" value="1"/>
</dbReference>
<dbReference type="Gene3D" id="1.20.120.220">
    <property type="entry name" value="ATP synthase, F0 complex, subunit A"/>
    <property type="match status" value="1"/>
</dbReference>
<dbReference type="HAMAP" id="MF_01393">
    <property type="entry name" value="ATP_synth_a_bact"/>
    <property type="match status" value="1"/>
</dbReference>
<dbReference type="InterPro" id="IPR000568">
    <property type="entry name" value="ATP_synth_F0_asu"/>
</dbReference>
<dbReference type="InterPro" id="IPR023011">
    <property type="entry name" value="ATP_synth_F0_asu_AS"/>
</dbReference>
<dbReference type="InterPro" id="IPR045083">
    <property type="entry name" value="ATP_synth_F0_asu_bact/mt"/>
</dbReference>
<dbReference type="InterPro" id="IPR035908">
    <property type="entry name" value="F0_ATP_A_sf"/>
</dbReference>
<dbReference type="NCBIfam" id="TIGR01131">
    <property type="entry name" value="ATP_synt_6_or_A"/>
    <property type="match status" value="1"/>
</dbReference>
<dbReference type="NCBIfam" id="NF004482">
    <property type="entry name" value="PRK05815.2-4"/>
    <property type="match status" value="1"/>
</dbReference>
<dbReference type="PANTHER" id="PTHR11410">
    <property type="entry name" value="ATP SYNTHASE SUBUNIT A"/>
    <property type="match status" value="1"/>
</dbReference>
<dbReference type="PANTHER" id="PTHR11410:SF0">
    <property type="entry name" value="ATP SYNTHASE SUBUNIT A"/>
    <property type="match status" value="1"/>
</dbReference>
<dbReference type="Pfam" id="PF00119">
    <property type="entry name" value="ATP-synt_A"/>
    <property type="match status" value="1"/>
</dbReference>
<dbReference type="PRINTS" id="PR00123">
    <property type="entry name" value="ATPASEA"/>
</dbReference>
<dbReference type="SUPFAM" id="SSF81336">
    <property type="entry name" value="F1F0 ATP synthase subunit A"/>
    <property type="match status" value="1"/>
</dbReference>
<dbReference type="PROSITE" id="PS00449">
    <property type="entry name" value="ATPASE_A"/>
    <property type="match status" value="1"/>
</dbReference>
<organism>
    <name type="scientific">Sinorhizobium medicae (strain WSM419)</name>
    <name type="common">Ensifer medicae</name>
    <dbReference type="NCBI Taxonomy" id="366394"/>
    <lineage>
        <taxon>Bacteria</taxon>
        <taxon>Pseudomonadati</taxon>
        <taxon>Pseudomonadota</taxon>
        <taxon>Alphaproteobacteria</taxon>
        <taxon>Hyphomicrobiales</taxon>
        <taxon>Rhizobiaceae</taxon>
        <taxon>Sinorhizobium/Ensifer group</taxon>
        <taxon>Sinorhizobium</taxon>
    </lineage>
</organism>
<evidence type="ECO:0000255" key="1">
    <source>
        <dbReference type="HAMAP-Rule" id="MF_01393"/>
    </source>
</evidence>
<comment type="function">
    <text evidence="1">Key component of the proton channel; it plays a direct role in the translocation of protons across the membrane.</text>
</comment>
<comment type="subunit">
    <text evidence="1">F-type ATPases have 2 components, CF(1) - the catalytic core - and CF(0) - the membrane proton channel. CF(1) has five subunits: alpha(3), beta(3), gamma(1), delta(1), epsilon(1). CF(0) has three main subunits: a(1), b(2) and c(9-12). The alpha and beta chains form an alternating ring which encloses part of the gamma chain. CF(1) is attached to CF(0) by a central stalk formed by the gamma and epsilon chains, while a peripheral stalk is formed by the delta and b chains.</text>
</comment>
<comment type="subcellular location">
    <subcellularLocation>
        <location evidence="1">Cell inner membrane</location>
        <topology evidence="1">Multi-pass membrane protein</topology>
    </subcellularLocation>
</comment>
<comment type="similarity">
    <text evidence="1">Belongs to the ATPase A chain family.</text>
</comment>
<name>ATP6_SINMW</name>
<accession>A6U6M4</accession>
<sequence>MSNDPTHQFLVNKIVSIDIGGIDFSFTNASLFMVATVGAAAGFLYLTTSQRGLIPTRMQSVSEMSYEFIASMLREGAGSQGMKFFPMVFSLFMFILTANLLGMVPYFFTVTSQIIVTFALAVFVIGTVILYGFYKHGFGFLKLFVPHGVPGALLPLVVAIEIISFLSRPISLSVRLFANMLAGHITLKVFAGFVASLSAFGALGIGGAILPLIMTVALTGLEFLVAFLQAYVFAVLTCMYLNDAVHPGSH</sequence>
<gene>
    <name evidence="1" type="primary">atpB</name>
    <name type="ordered locus">Smed_0447</name>
</gene>
<feature type="chain" id="PRO_0000362469" description="ATP synthase subunit a">
    <location>
        <begin position="1"/>
        <end position="250"/>
    </location>
</feature>
<feature type="transmembrane region" description="Helical" evidence="1">
    <location>
        <begin position="26"/>
        <end position="46"/>
    </location>
</feature>
<feature type="transmembrane region" description="Helical" evidence="1">
    <location>
        <begin position="84"/>
        <end position="104"/>
    </location>
</feature>
<feature type="transmembrane region" description="Helical" evidence="1">
    <location>
        <begin position="114"/>
        <end position="134"/>
    </location>
</feature>
<feature type="transmembrane region" description="Helical" evidence="1">
    <location>
        <begin position="143"/>
        <end position="163"/>
    </location>
</feature>
<feature type="transmembrane region" description="Helical" evidence="1">
    <location>
        <begin position="193"/>
        <end position="213"/>
    </location>
</feature>
<feature type="transmembrane region" description="Helical" evidence="1">
    <location>
        <begin position="216"/>
        <end position="236"/>
    </location>
</feature>
<reference key="1">
    <citation type="submission" date="2007-06" db="EMBL/GenBank/DDBJ databases">
        <title>Complete sequence of Sinorhizobium medicae WSM419 chromosome.</title>
        <authorList>
            <consortium name="US DOE Joint Genome Institute"/>
            <person name="Copeland A."/>
            <person name="Lucas S."/>
            <person name="Lapidus A."/>
            <person name="Barry K."/>
            <person name="Glavina del Rio T."/>
            <person name="Dalin E."/>
            <person name="Tice H."/>
            <person name="Pitluck S."/>
            <person name="Chain P."/>
            <person name="Malfatti S."/>
            <person name="Shin M."/>
            <person name="Vergez L."/>
            <person name="Schmutz J."/>
            <person name="Larimer F."/>
            <person name="Land M."/>
            <person name="Hauser L."/>
            <person name="Kyrpides N."/>
            <person name="Mikhailova N."/>
            <person name="Reeve W.G."/>
            <person name="Richardson P."/>
        </authorList>
    </citation>
    <scope>NUCLEOTIDE SEQUENCE [LARGE SCALE GENOMIC DNA]</scope>
    <source>
        <strain>WSM419</strain>
    </source>
</reference>
<proteinExistence type="inferred from homology"/>
<keyword id="KW-0066">ATP synthesis</keyword>
<keyword id="KW-0997">Cell inner membrane</keyword>
<keyword id="KW-1003">Cell membrane</keyword>
<keyword id="KW-0138">CF(0)</keyword>
<keyword id="KW-0375">Hydrogen ion transport</keyword>
<keyword id="KW-0406">Ion transport</keyword>
<keyword id="KW-0472">Membrane</keyword>
<keyword id="KW-0812">Transmembrane</keyword>
<keyword id="KW-1133">Transmembrane helix</keyword>
<keyword id="KW-0813">Transport</keyword>
<protein>
    <recommendedName>
        <fullName evidence="1">ATP synthase subunit a</fullName>
    </recommendedName>
    <alternativeName>
        <fullName evidence="1">ATP synthase F0 sector subunit a</fullName>
    </alternativeName>
    <alternativeName>
        <fullName evidence="1">F-ATPase subunit 6</fullName>
    </alternativeName>
</protein>